<accession>A6VPF5</accession>
<gene>
    <name evidence="1" type="primary">rplM</name>
    <name type="ordered locus">Asuc_1494</name>
</gene>
<sequence>MKTFVAKPETVKRDWYVVDATGKTLGRLATELARRLRGKHKAEYTPHVDTGDYIIVINADKVAVTGRKETDKVYYWHTGYVGGIKQATFKEMIARRPEAVIEIAVKGMLPKGPLGRAMFRKLKVYAGAQHEHTAQQPQVLDI</sequence>
<feature type="chain" id="PRO_1000073410" description="Large ribosomal subunit protein uL13">
    <location>
        <begin position="1"/>
        <end position="142"/>
    </location>
</feature>
<evidence type="ECO:0000255" key="1">
    <source>
        <dbReference type="HAMAP-Rule" id="MF_01366"/>
    </source>
</evidence>
<evidence type="ECO:0000305" key="2"/>
<name>RL13_ACTSZ</name>
<protein>
    <recommendedName>
        <fullName evidence="1">Large ribosomal subunit protein uL13</fullName>
    </recommendedName>
    <alternativeName>
        <fullName evidence="2">50S ribosomal protein L13</fullName>
    </alternativeName>
</protein>
<reference key="1">
    <citation type="journal article" date="2010" name="BMC Genomics">
        <title>A genomic perspective on the potential of Actinobacillus succinogenes for industrial succinate production.</title>
        <authorList>
            <person name="McKinlay J.B."/>
            <person name="Laivenieks M."/>
            <person name="Schindler B.D."/>
            <person name="McKinlay A.A."/>
            <person name="Siddaramappa S."/>
            <person name="Challacombe J.F."/>
            <person name="Lowry S.R."/>
            <person name="Clum A."/>
            <person name="Lapidus A.L."/>
            <person name="Burkhart K.B."/>
            <person name="Harkins V."/>
            <person name="Vieille C."/>
        </authorList>
    </citation>
    <scope>NUCLEOTIDE SEQUENCE [LARGE SCALE GENOMIC DNA]</scope>
    <source>
        <strain>ATCC 55618 / DSM 22257 / CCUG 43843 / 130Z</strain>
    </source>
</reference>
<comment type="function">
    <text evidence="1">This protein is one of the early assembly proteins of the 50S ribosomal subunit, although it is not seen to bind rRNA by itself. It is important during the early stages of 50S assembly.</text>
</comment>
<comment type="subunit">
    <text evidence="1">Part of the 50S ribosomal subunit.</text>
</comment>
<comment type="similarity">
    <text evidence="1">Belongs to the universal ribosomal protein uL13 family.</text>
</comment>
<dbReference type="EMBL" id="CP000746">
    <property type="protein sequence ID" value="ABR74852.1"/>
    <property type="molecule type" value="Genomic_DNA"/>
</dbReference>
<dbReference type="RefSeq" id="WP_012073229.1">
    <property type="nucleotide sequence ID" value="NC_009655.1"/>
</dbReference>
<dbReference type="SMR" id="A6VPF5"/>
<dbReference type="STRING" id="339671.Asuc_1494"/>
<dbReference type="KEGG" id="asu:Asuc_1494"/>
<dbReference type="eggNOG" id="COG0102">
    <property type="taxonomic scope" value="Bacteria"/>
</dbReference>
<dbReference type="HOGENOM" id="CLU_082184_2_2_6"/>
<dbReference type="OrthoDB" id="9801330at2"/>
<dbReference type="Proteomes" id="UP000001114">
    <property type="component" value="Chromosome"/>
</dbReference>
<dbReference type="GO" id="GO:0022625">
    <property type="term" value="C:cytosolic large ribosomal subunit"/>
    <property type="evidence" value="ECO:0007669"/>
    <property type="project" value="TreeGrafter"/>
</dbReference>
<dbReference type="GO" id="GO:0003729">
    <property type="term" value="F:mRNA binding"/>
    <property type="evidence" value="ECO:0007669"/>
    <property type="project" value="TreeGrafter"/>
</dbReference>
<dbReference type="GO" id="GO:0003735">
    <property type="term" value="F:structural constituent of ribosome"/>
    <property type="evidence" value="ECO:0007669"/>
    <property type="project" value="InterPro"/>
</dbReference>
<dbReference type="GO" id="GO:0017148">
    <property type="term" value="P:negative regulation of translation"/>
    <property type="evidence" value="ECO:0007669"/>
    <property type="project" value="TreeGrafter"/>
</dbReference>
<dbReference type="GO" id="GO:0006412">
    <property type="term" value="P:translation"/>
    <property type="evidence" value="ECO:0007669"/>
    <property type="project" value="UniProtKB-UniRule"/>
</dbReference>
<dbReference type="CDD" id="cd00392">
    <property type="entry name" value="Ribosomal_L13"/>
    <property type="match status" value="1"/>
</dbReference>
<dbReference type="FunFam" id="3.90.1180.10:FF:000001">
    <property type="entry name" value="50S ribosomal protein L13"/>
    <property type="match status" value="1"/>
</dbReference>
<dbReference type="Gene3D" id="3.90.1180.10">
    <property type="entry name" value="Ribosomal protein L13"/>
    <property type="match status" value="1"/>
</dbReference>
<dbReference type="HAMAP" id="MF_01366">
    <property type="entry name" value="Ribosomal_uL13"/>
    <property type="match status" value="1"/>
</dbReference>
<dbReference type="InterPro" id="IPR005822">
    <property type="entry name" value="Ribosomal_uL13"/>
</dbReference>
<dbReference type="InterPro" id="IPR005823">
    <property type="entry name" value="Ribosomal_uL13_bac-type"/>
</dbReference>
<dbReference type="InterPro" id="IPR023563">
    <property type="entry name" value="Ribosomal_uL13_CS"/>
</dbReference>
<dbReference type="InterPro" id="IPR036899">
    <property type="entry name" value="Ribosomal_uL13_sf"/>
</dbReference>
<dbReference type="NCBIfam" id="TIGR01066">
    <property type="entry name" value="rplM_bact"/>
    <property type="match status" value="1"/>
</dbReference>
<dbReference type="PANTHER" id="PTHR11545:SF2">
    <property type="entry name" value="LARGE RIBOSOMAL SUBUNIT PROTEIN UL13M"/>
    <property type="match status" value="1"/>
</dbReference>
<dbReference type="PANTHER" id="PTHR11545">
    <property type="entry name" value="RIBOSOMAL PROTEIN L13"/>
    <property type="match status" value="1"/>
</dbReference>
<dbReference type="Pfam" id="PF00572">
    <property type="entry name" value="Ribosomal_L13"/>
    <property type="match status" value="1"/>
</dbReference>
<dbReference type="PIRSF" id="PIRSF002181">
    <property type="entry name" value="Ribosomal_L13"/>
    <property type="match status" value="1"/>
</dbReference>
<dbReference type="SUPFAM" id="SSF52161">
    <property type="entry name" value="Ribosomal protein L13"/>
    <property type="match status" value="1"/>
</dbReference>
<dbReference type="PROSITE" id="PS00783">
    <property type="entry name" value="RIBOSOMAL_L13"/>
    <property type="match status" value="1"/>
</dbReference>
<proteinExistence type="inferred from homology"/>
<organism>
    <name type="scientific">Actinobacillus succinogenes (strain ATCC 55618 / DSM 22257 / CCUG 43843 / 130Z)</name>
    <dbReference type="NCBI Taxonomy" id="339671"/>
    <lineage>
        <taxon>Bacteria</taxon>
        <taxon>Pseudomonadati</taxon>
        <taxon>Pseudomonadota</taxon>
        <taxon>Gammaproteobacteria</taxon>
        <taxon>Pasteurellales</taxon>
        <taxon>Pasteurellaceae</taxon>
        <taxon>Actinobacillus</taxon>
    </lineage>
</organism>
<keyword id="KW-1185">Reference proteome</keyword>
<keyword id="KW-0687">Ribonucleoprotein</keyword>
<keyword id="KW-0689">Ribosomal protein</keyword>